<sequence length="60" mass="6757">MAVQQNKKSRSARDMRRSHDALEASTLSVEKTTGEVHLRHHVSPEGVYRGRKVIDKGADE</sequence>
<dbReference type="EMBL" id="CP000094">
    <property type="protein sequence ID" value="ABA75897.1"/>
    <property type="molecule type" value="Genomic_DNA"/>
</dbReference>
<dbReference type="RefSeq" id="WP_003179396.1">
    <property type="nucleotide sequence ID" value="NC_007492.2"/>
</dbReference>
<dbReference type="SMR" id="Q3K8K7"/>
<dbReference type="GeneID" id="98112605"/>
<dbReference type="KEGG" id="pfo:Pfl01_4160"/>
<dbReference type="eggNOG" id="COG0333">
    <property type="taxonomic scope" value="Bacteria"/>
</dbReference>
<dbReference type="HOGENOM" id="CLU_129084_2_1_6"/>
<dbReference type="Proteomes" id="UP000002704">
    <property type="component" value="Chromosome"/>
</dbReference>
<dbReference type="GO" id="GO:0015934">
    <property type="term" value="C:large ribosomal subunit"/>
    <property type="evidence" value="ECO:0007669"/>
    <property type="project" value="InterPro"/>
</dbReference>
<dbReference type="GO" id="GO:0003735">
    <property type="term" value="F:structural constituent of ribosome"/>
    <property type="evidence" value="ECO:0007669"/>
    <property type="project" value="InterPro"/>
</dbReference>
<dbReference type="GO" id="GO:0006412">
    <property type="term" value="P:translation"/>
    <property type="evidence" value="ECO:0007669"/>
    <property type="project" value="UniProtKB-UniRule"/>
</dbReference>
<dbReference type="HAMAP" id="MF_00340">
    <property type="entry name" value="Ribosomal_bL32"/>
    <property type="match status" value="1"/>
</dbReference>
<dbReference type="InterPro" id="IPR002677">
    <property type="entry name" value="Ribosomal_bL32"/>
</dbReference>
<dbReference type="InterPro" id="IPR044957">
    <property type="entry name" value="Ribosomal_bL32_bact"/>
</dbReference>
<dbReference type="InterPro" id="IPR011332">
    <property type="entry name" value="Ribosomal_zn-bd"/>
</dbReference>
<dbReference type="NCBIfam" id="TIGR01031">
    <property type="entry name" value="rpmF_bact"/>
    <property type="match status" value="1"/>
</dbReference>
<dbReference type="PANTHER" id="PTHR35534">
    <property type="entry name" value="50S RIBOSOMAL PROTEIN L32"/>
    <property type="match status" value="1"/>
</dbReference>
<dbReference type="PANTHER" id="PTHR35534:SF1">
    <property type="entry name" value="LARGE RIBOSOMAL SUBUNIT PROTEIN BL32"/>
    <property type="match status" value="1"/>
</dbReference>
<dbReference type="Pfam" id="PF01783">
    <property type="entry name" value="Ribosomal_L32p"/>
    <property type="match status" value="1"/>
</dbReference>
<dbReference type="SUPFAM" id="SSF57829">
    <property type="entry name" value="Zn-binding ribosomal proteins"/>
    <property type="match status" value="1"/>
</dbReference>
<protein>
    <recommendedName>
        <fullName evidence="1">Large ribosomal subunit protein bL32</fullName>
    </recommendedName>
    <alternativeName>
        <fullName evidence="3">50S ribosomal protein L32</fullName>
    </alternativeName>
</protein>
<feature type="chain" id="PRO_0000225752" description="Large ribosomal subunit protein bL32">
    <location>
        <begin position="1"/>
        <end position="60"/>
    </location>
</feature>
<feature type="region of interest" description="Disordered" evidence="2">
    <location>
        <begin position="1"/>
        <end position="44"/>
    </location>
</feature>
<feature type="compositionally biased region" description="Basic and acidic residues" evidence="2">
    <location>
        <begin position="11"/>
        <end position="22"/>
    </location>
</feature>
<organism>
    <name type="scientific">Pseudomonas fluorescens (strain Pf0-1)</name>
    <dbReference type="NCBI Taxonomy" id="205922"/>
    <lineage>
        <taxon>Bacteria</taxon>
        <taxon>Pseudomonadati</taxon>
        <taxon>Pseudomonadota</taxon>
        <taxon>Gammaproteobacteria</taxon>
        <taxon>Pseudomonadales</taxon>
        <taxon>Pseudomonadaceae</taxon>
        <taxon>Pseudomonas</taxon>
    </lineage>
</organism>
<proteinExistence type="inferred from homology"/>
<accession>Q3K8K7</accession>
<keyword id="KW-0687">Ribonucleoprotein</keyword>
<keyword id="KW-0689">Ribosomal protein</keyword>
<name>RL32_PSEPF</name>
<evidence type="ECO:0000255" key="1">
    <source>
        <dbReference type="HAMAP-Rule" id="MF_00340"/>
    </source>
</evidence>
<evidence type="ECO:0000256" key="2">
    <source>
        <dbReference type="SAM" id="MobiDB-lite"/>
    </source>
</evidence>
<evidence type="ECO:0000305" key="3"/>
<comment type="similarity">
    <text evidence="1">Belongs to the bacterial ribosomal protein bL32 family.</text>
</comment>
<gene>
    <name evidence="1" type="primary">rpmF</name>
    <name type="ordered locus">Pfl01_4160</name>
</gene>
<reference key="1">
    <citation type="journal article" date="2009" name="Genome Biol.">
        <title>Genomic and genetic analyses of diversity and plant interactions of Pseudomonas fluorescens.</title>
        <authorList>
            <person name="Silby M.W."/>
            <person name="Cerdeno-Tarraga A.M."/>
            <person name="Vernikos G.S."/>
            <person name="Giddens S.R."/>
            <person name="Jackson R.W."/>
            <person name="Preston G.M."/>
            <person name="Zhang X.-X."/>
            <person name="Moon C.D."/>
            <person name="Gehrig S.M."/>
            <person name="Godfrey S.A.C."/>
            <person name="Knight C.G."/>
            <person name="Malone J.G."/>
            <person name="Robinson Z."/>
            <person name="Spiers A.J."/>
            <person name="Harris S."/>
            <person name="Challis G.L."/>
            <person name="Yaxley A.M."/>
            <person name="Harris D."/>
            <person name="Seeger K."/>
            <person name="Murphy L."/>
            <person name="Rutter S."/>
            <person name="Squares R."/>
            <person name="Quail M.A."/>
            <person name="Saunders E."/>
            <person name="Mavromatis K."/>
            <person name="Brettin T.S."/>
            <person name="Bentley S.D."/>
            <person name="Hothersall J."/>
            <person name="Stephens E."/>
            <person name="Thomas C.M."/>
            <person name="Parkhill J."/>
            <person name="Levy S.B."/>
            <person name="Rainey P.B."/>
            <person name="Thomson N.R."/>
        </authorList>
    </citation>
    <scope>NUCLEOTIDE SEQUENCE [LARGE SCALE GENOMIC DNA]</scope>
    <source>
        <strain>Pf0-1</strain>
    </source>
</reference>